<dbReference type="EMBL" id="J02400">
    <property type="protein sequence ID" value="AAB59921.1"/>
    <property type="molecule type" value="Genomic_DNA"/>
</dbReference>
<dbReference type="EMBL" id="J02400">
    <property type="protein sequence ID" value="AAB59922.1"/>
    <property type="molecule type" value="Genomic_DNA"/>
</dbReference>
<dbReference type="PIR" id="A03631">
    <property type="entry name" value="VVVP24"/>
</dbReference>
<dbReference type="RefSeq" id="NP_043125.1">
    <molecule id="P03093-2"/>
    <property type="nucleotide sequence ID" value="NC_001669.1"/>
</dbReference>
<dbReference type="RefSeq" id="YP_003708379.1">
    <property type="nucleotide sequence ID" value="NC_001669.1"/>
</dbReference>
<dbReference type="RefSeq" id="YP_003708380.1">
    <property type="nucleotide sequence ID" value="NC_001669.1"/>
</dbReference>
<dbReference type="IntAct" id="P03093">
    <property type="interactions" value="2"/>
</dbReference>
<dbReference type="MINT" id="P03093"/>
<dbReference type="TCDB" id="1.A.83.1.1">
    <property type="family name" value="the sv40 virus viroporin vp2 (sv40 vp2) family"/>
</dbReference>
<dbReference type="iPTMnet" id="P03093"/>
<dbReference type="OrthoDB" id="6378at10239"/>
<dbReference type="Proteomes" id="UP000007705">
    <property type="component" value="Genome"/>
</dbReference>
<dbReference type="GO" id="GO:0043657">
    <property type="term" value="C:host cell"/>
    <property type="evidence" value="ECO:0007669"/>
    <property type="project" value="GOC"/>
</dbReference>
<dbReference type="GO" id="GO:0044167">
    <property type="term" value="C:host cell endoplasmic reticulum membrane"/>
    <property type="evidence" value="ECO:0007669"/>
    <property type="project" value="UniProtKB-SubCell"/>
</dbReference>
<dbReference type="GO" id="GO:0042025">
    <property type="term" value="C:host cell nucleus"/>
    <property type="evidence" value="ECO:0007669"/>
    <property type="project" value="UniProtKB-SubCell"/>
</dbReference>
<dbReference type="GO" id="GO:0016020">
    <property type="term" value="C:membrane"/>
    <property type="evidence" value="ECO:0007669"/>
    <property type="project" value="UniProtKB-KW"/>
</dbReference>
<dbReference type="GO" id="GO:0019028">
    <property type="term" value="C:viral capsid"/>
    <property type="evidence" value="ECO:0007669"/>
    <property type="project" value="UniProtKB-KW"/>
</dbReference>
<dbReference type="GO" id="GO:0015267">
    <property type="term" value="F:channel activity"/>
    <property type="evidence" value="ECO:0007669"/>
    <property type="project" value="UniProtKB-KW"/>
</dbReference>
<dbReference type="GO" id="GO:0003677">
    <property type="term" value="F:DNA binding"/>
    <property type="evidence" value="ECO:0007669"/>
    <property type="project" value="UniProtKB-KW"/>
</dbReference>
<dbReference type="GO" id="GO:0005198">
    <property type="term" value="F:structural molecule activity"/>
    <property type="evidence" value="ECO:0007669"/>
    <property type="project" value="InterPro"/>
</dbReference>
<dbReference type="GO" id="GO:0034220">
    <property type="term" value="P:monoatomic ion transmembrane transport"/>
    <property type="evidence" value="ECO:0007669"/>
    <property type="project" value="UniProtKB-KW"/>
</dbReference>
<dbReference type="GO" id="GO:0140267">
    <property type="term" value="P:symbiont entry into host cell via permeabilization of host membrane"/>
    <property type="evidence" value="ECO:0007669"/>
    <property type="project" value="UniProtKB-KW"/>
</dbReference>
<dbReference type="GO" id="GO:0075732">
    <property type="term" value="P:viral penetration into host nucleus"/>
    <property type="evidence" value="ECO:0007669"/>
    <property type="project" value="UniProtKB-KW"/>
</dbReference>
<dbReference type="GO" id="GO:0019062">
    <property type="term" value="P:virion attachment to host cell"/>
    <property type="evidence" value="ECO:0007669"/>
    <property type="project" value="UniProtKB-KW"/>
</dbReference>
<dbReference type="InterPro" id="IPR001070">
    <property type="entry name" value="Polyoma_coat_VP2"/>
</dbReference>
<dbReference type="Pfam" id="PF00761">
    <property type="entry name" value="Polyoma_coat2"/>
    <property type="match status" value="1"/>
</dbReference>
<dbReference type="PIRSF" id="PIRSF003377">
    <property type="entry name" value="Polyoma_coat2"/>
    <property type="match status" value="1"/>
</dbReference>
<name>VP2_SV40</name>
<evidence type="ECO:0000255" key="1"/>
<evidence type="ECO:0000256" key="2">
    <source>
        <dbReference type="SAM" id="MobiDB-lite"/>
    </source>
</evidence>
<evidence type="ECO:0000269" key="3">
    <source>
    </source>
</evidence>
<evidence type="ECO:0000269" key="4">
    <source>
    </source>
</evidence>
<evidence type="ECO:0000269" key="5">
    <source>
    </source>
</evidence>
<evidence type="ECO:0000269" key="6">
    <source>
    </source>
</evidence>
<evidence type="ECO:0000269" key="7">
    <source>
    </source>
</evidence>
<evidence type="ECO:0000269" key="8">
    <source>
    </source>
</evidence>
<evidence type="ECO:0000269" key="9">
    <source>
    </source>
</evidence>
<evidence type="ECO:0000269" key="10">
    <source>
    </source>
</evidence>
<evidence type="ECO:0000269" key="11">
    <source>
    </source>
</evidence>
<evidence type="ECO:0000269" key="12">
    <source>
    </source>
</evidence>
<evidence type="ECO:0000269" key="13">
    <source>
    </source>
</evidence>
<evidence type="ECO:0000269" key="14">
    <source>
    </source>
</evidence>
<evidence type="ECO:0000305" key="15"/>
<sequence>MGAALTLLGDLIATVSEAAAATGFSVAEIAAGEAAAAIEVQLASVATVEGLTTSEAIAAIGLIPQAYAVISGAPAAIAGFAALLQTVTGVSAVAQVGYRFFSDWDHKVSTVGLYQQPGMAVDLYRPDDYYDILFPGVQTFVHSVQYLDPRHWGPTLFNAISQAFWRVIQNDIPRLTSQELERRTQRYLRDSLARFLEETTWTVINAPVNWYNSLQDYYSTLSPIRPTMVRQVANREGLQISFGHTYDNIDEADSIQQVTERWEAQSQSPNVQSGEFIEKFEAPGGANQRTAPQWMLPLLLGLYGSVTSALKAYEDGPNKKKRKLSRGSSQKTKGTSASAKARHKRRNRSSRS</sequence>
<comment type="function">
    <molecule>Isoform VP2</molecule>
    <text evidence="5 11 12">Structural protein that resides within the core of the capsid surrounded by 72 VP1 pentamers. Following virus endocytosis and trafficking to the endoplasmic reticulum, VP2 and VP3 form oligomers and integrate into the endoplasmic reticulum membrane. Heterooligomer VP2-VP3 may create a viroporin for transporting the viral genome across the endoplasmic reticulum membrane to the cytoplasm. Nuclear entry of the viral DNA involves the selective exposure and importin recognition of VP2 or VP3 nuclear localization signal (shared C-terminus). Plays a role in virion assembly within the nucleus in particular through a DNA-binding domain located in the C-terminal region. A N-terminal myristoylation suggests a scaffold function for virion assembly. The viral progenies exit the cells by lytic release. Isoform VP2 may repress SP1 activation of the SV40 early promoter, via specific protein-protein and protein-DNA interactions.</text>
</comment>
<comment type="function">
    <molecule>Isoform VP3</molecule>
    <text evidence="3 5 10 12 14">Structural protein that resides within the core of the capsid surrounded by 72 VP1 pentamers. Following virus entry, VP2 and VP3 form oligomers and integrate into the endoplasmic reticulum membrane. Heterooligomer VP2-VP3 may create a viroporin for transporting the viral genome across the endoplasmic reticulum membrane. Essential for focus formation and virus endoplasmic reticulum-to-cytosol membrane transport, required to recruit selective cellular components to the foci in the ER membrane. Nuclear entry of the viral DNA involves the selective exposure and importin recognition of VP2 or VP3 nuclear localization signal (shared C-terminus). Isoform VP3 represses SP1 activation of the SV40 early promoter, via specific protein-protein and protein-DNA interactions. SP1 additionally participates in recruiting VP3 to the SV40 minichromosome during SV40 assembly. Plays a role in virion assembly within the nucleus. May initiate host cell lysis when associated with VP4.</text>
</comment>
<comment type="function">
    <molecule>Isoform VP4</molecule>
    <text evidence="9">Viroporin inducing perforation of cellular membranes to trigger virus progeny release. Forms pores of 3 nm inner diameter. VP4 is expressed about 24 hours after the late structural proteins and is not incorporated into the mature virion.</text>
</comment>
<comment type="subunit">
    <molecule>Isoform VP2</molecule>
    <text evidence="4 5">Forms homooligomers, and heterooligomers with VP3 in the endoplasmic reticulum membrane. Interacts (via D1 domain) with VP1.</text>
</comment>
<comment type="subunit">
    <molecule>Isoform VP3</molecule>
    <text evidence="3 4 14">Interacts (via D1 domain) with VP1 (PubMed:16940501). Interacts (via C-terminus) with host SP1, this is probably also the case for VP2; this interaction represses SP1 activation of the SV40 early promoter and participates in virion assembly (PubMed:9466902). Interacts (via nuclear localization signal) with host importin alpha2-beta heterodimer (PubMed:12186919).</text>
</comment>
<comment type="subunit">
    <molecule>Isoform VP4</molecule>
    <text>Oligomerizes with VP3 in the nucleus.</text>
</comment>
<comment type="interaction">
    <interactant intactId="EBI-1555798">
        <id>P03093</id>
    </interactant>
    <interactant intactId="EBI-1555770">
        <id>P03087</id>
    </interactant>
    <organismsDiffer>false</organismsDiffer>
    <experiments>3</experiments>
</comment>
<comment type="subcellular location">
    <molecule>Isoform VP2</molecule>
    <subcellularLocation>
        <location evidence="15">Virion</location>
    </subcellularLocation>
    <subcellularLocation>
        <location evidence="7">Host nucleus</location>
    </subcellularLocation>
    <subcellularLocation>
        <location evidence="5">Host endoplasmic reticulum</location>
    </subcellularLocation>
    <subcellularLocation>
        <location evidence="5">Host endoplasmic reticulum membrane</location>
    </subcellularLocation>
    <text evidence="5 7">Following host cell entry, the virion enters into the endoplasmic reticulum through a calveolar-dependent pathway. Then, isoform VP2 integrates into the endoplasmic reticulum membrane and participates in the translocation of viral DNA to the nucleus. Shortly after synthesis, a nuclear localization signal directs isoform VP2 to the cell nucleus where virion assembly occurs.</text>
</comment>
<comment type="subcellular location">
    <molecule>Isoform VP3</molecule>
    <subcellularLocation>
        <location evidence="15">Virion</location>
    </subcellularLocation>
    <subcellularLocation>
        <location evidence="7">Host nucleus</location>
    </subcellularLocation>
    <subcellularLocation>
        <location evidence="5">Host endoplasmic reticulum</location>
    </subcellularLocation>
    <subcellularLocation>
        <location evidence="5 10">Host endoplasmic reticulum membrane</location>
    </subcellularLocation>
    <text evidence="5 7">Following host cell entry, the virion enters into the endoplasmic reticulum through a calveolar-dependent pathway. Then, isoform VP3 integrates into the endoplasmic reticulum membrane and participates in the translocation of viral DNA to the nucleus. Shortly after synthesis, a nuclear localization signal directs isoform VP3 to the cell nucleus where virion assembly occurs.</text>
</comment>
<comment type="subcellular location">
    <molecule>Isoform VP4</molecule>
    <subcellularLocation>
        <location evidence="6">Host nucleus</location>
    </subcellularLocation>
</comment>
<comment type="alternative products">
    <event type="alternative splicing"/>
    <event type="alternative initiation"/>
    <isoform>
        <id>P03093-1</id>
        <name>VP2</name>
        <name>Minor capsid protein VP2</name>
        <sequence type="displayed"/>
    </isoform>
    <isoform>
        <id>P03093-2</id>
        <name>VP3</name>
        <name>Minor capsid protein VP3</name>
        <sequence type="described" ref="VSP_018925"/>
    </isoform>
    <isoform>
        <id>P03093-3</id>
        <name>VP4</name>
        <name>Viroporin VP4</name>
        <sequence type="described" ref="VSP_035892"/>
    </isoform>
    <isoform>
        <id>P03087-1</id>
        <name>VP1</name>
        <name>Major capsid protein VP1</name>
        <sequence type="external"/>
    </isoform>
    <isoform>
        <id>P03084-1</id>
        <name>Agno</name>
        <sequence type="external"/>
    </isoform>
</comment>
<comment type="domain">
    <text evidence="4">The D1 region of isoform VP2 and isoform VP3 is necessary and sufficient to direct the interaction with VP1.</text>
</comment>
<comment type="domain">
    <text evidence="13">The basic-rich C-terminal region of isoforms VP2 and VP3 is sufficient for DNA-binding and may cause compaction of the DNA.</text>
</comment>
<comment type="domain">
    <text>The transmembrane region is only used when isoform VP2 and isoform VP3 form oligomers and integrate into the endoplasmic reticulum membrane.</text>
</comment>
<comment type="miscellaneous">
    <molecule>Isoform VP2</molecule>
    <text>Produced by alternative splicing of the late mRNA (19s mRNA).</text>
</comment>
<comment type="miscellaneous">
    <molecule>Isoform VP3</molecule>
    <text evidence="8">Produced by alternative initiation at Met-119 of isoform VP2.</text>
</comment>
<comment type="miscellaneous">
    <molecule>Isoform VP4</molecule>
    <text evidence="6">Produced by alternative initiation at Met-228 of isoform VP2.</text>
</comment>
<comment type="similarity">
    <text evidence="15">Belongs to the polyomaviruses capsid protein VP2 family.</text>
</comment>
<proteinExistence type="evidence at protein level"/>
<keyword id="KW-0024">Alternative initiation</keyword>
<keyword id="KW-0025">Alternative splicing</keyword>
<keyword id="KW-0167">Capsid protein</keyword>
<keyword id="KW-0238">DNA-binding</keyword>
<keyword id="KW-1038">Host endoplasmic reticulum</keyword>
<keyword id="KW-1043">Host membrane</keyword>
<keyword id="KW-1048">Host nucleus</keyword>
<keyword id="KW-0945">Host-virus interaction</keyword>
<keyword id="KW-0407">Ion channel</keyword>
<keyword id="KW-0406">Ion transport</keyword>
<keyword id="KW-0426">Late protein</keyword>
<keyword id="KW-0449">Lipoprotein</keyword>
<keyword id="KW-0472">Membrane</keyword>
<keyword id="KW-0519">Myristate</keyword>
<keyword id="KW-1185">Reference proteome</keyword>
<keyword id="KW-0812">Transmembrane</keyword>
<keyword id="KW-1133">Transmembrane helix</keyword>
<keyword id="KW-0813">Transport</keyword>
<keyword id="KW-1161">Viral attachment to host cell</keyword>
<keyword id="KW-1182">Viral ion channel</keyword>
<keyword id="KW-1162">Viral penetration into host cytoplasm</keyword>
<keyword id="KW-1163">Viral penetration into host nucleus</keyword>
<keyword id="KW-1173">Viral penetration via permeabilization of host membrane</keyword>
<keyword id="KW-1188">Viral release from host cell</keyword>
<keyword id="KW-0946">Virion</keyword>
<keyword id="KW-1160">Virus entry into host cell</keyword>
<accession>P03093</accession>
<organism>
    <name type="scientific">Simian virus 40</name>
    <name type="common">SV40</name>
    <dbReference type="NCBI Taxonomy" id="1891767"/>
    <lineage>
        <taxon>Viruses</taxon>
        <taxon>Monodnaviria</taxon>
        <taxon>Shotokuvirae</taxon>
        <taxon>Cossaviricota</taxon>
        <taxon>Papovaviricetes</taxon>
        <taxon>Sepolyvirales</taxon>
        <taxon>Polyomaviridae</taxon>
        <taxon>Betapolyomavirus</taxon>
    </lineage>
</organism>
<protein>
    <recommendedName>
        <fullName>Minor capsid protein VP2</fullName>
    </recommendedName>
    <alternativeName>
        <fullName>Minor structural protein VP2</fullName>
    </alternativeName>
</protein>
<feature type="initiator methionine" description="Removed; by host" evidence="15">
    <location>
        <position position="1"/>
    </location>
</feature>
<feature type="chain" id="PRO_0000039223" description="Minor capsid protein VP2">
    <location>
        <begin position="2"/>
        <end position="352"/>
    </location>
</feature>
<feature type="transmembrane region" description="Helical" evidence="1">
    <location>
        <begin position="290"/>
        <end position="310"/>
    </location>
</feature>
<feature type="region of interest" description="D1" evidence="4">
    <location>
        <begin position="273"/>
        <end position="308"/>
    </location>
</feature>
<feature type="region of interest" description="Disordered" evidence="2">
    <location>
        <begin position="313"/>
        <end position="352"/>
    </location>
</feature>
<feature type="region of interest" description="DNA-binding" evidence="13">
    <location>
        <begin position="313"/>
        <end position="352"/>
    </location>
</feature>
<feature type="short sequence motif" description="Nuclear localization signal" evidence="7">
    <location>
        <begin position="316"/>
        <end position="324"/>
    </location>
</feature>
<feature type="compositionally biased region" description="Polar residues" evidence="2">
    <location>
        <begin position="326"/>
        <end position="338"/>
    </location>
</feature>
<feature type="compositionally biased region" description="Basic residues" evidence="2">
    <location>
        <begin position="340"/>
        <end position="352"/>
    </location>
</feature>
<feature type="lipid moiety-binding region" description="N-myristoyl glycine; by host" evidence="11">
    <location>
        <position position="2"/>
    </location>
</feature>
<feature type="splice variant" id="VSP_035892" description="In isoform VP4." evidence="15">
    <location>
        <begin position="1"/>
        <end position="227"/>
    </location>
</feature>
<feature type="splice variant" id="VSP_018925" description="In isoform VP3." evidence="15">
    <location>
        <begin position="1"/>
        <end position="118"/>
    </location>
</feature>
<feature type="sequence variant" description="In strain: 776.">
    <original>I</original>
    <variation>T</variation>
    <location>
        <position position="63"/>
    </location>
</feature>
<feature type="mutagenesis site" description="Complete loss of interaction with VP1." evidence="4">
    <original>FI</original>
    <variation>EE</variation>
    <location>
        <begin position="276"/>
        <end position="277"/>
    </location>
</feature>
<feature type="mutagenesis site" description="Complete loss of interaction with VP1." evidence="4">
    <original>PGG</original>
    <variation>RER</variation>
    <location>
        <begin position="283"/>
        <end position="285"/>
    </location>
</feature>
<feature type="mutagenesis site" description="Partial loss of interaction with VP1." evidence="4">
    <original>L</original>
    <variation>E</variation>
    <location>
        <position position="296"/>
    </location>
</feature>
<feature type="mutagenesis site" description="Partial loss of interaction with VP1." evidence="4">
    <original>L</original>
    <variation>E</variation>
    <location>
        <position position="300"/>
    </location>
</feature>
<feature type="mutagenesis site" description="Partial loss of DNA-binding activity." evidence="12">
    <original>K</original>
    <variation>T</variation>
    <location>
        <position position="344"/>
    </location>
</feature>
<feature type="mutagenesis site" description="Partial loss of DNA-binding activity." evidence="12">
    <original>R</original>
    <variation>T</variation>
    <location>
        <position position="348"/>
    </location>
</feature>
<reference key="1">
    <citation type="journal article" date="1978" name="Science">
        <title>The genome of simian virus 40.</title>
        <authorList>
            <person name="Reddy V.B."/>
            <person name="Thimmappaya B."/>
            <person name="Dhar R."/>
            <person name="Subramanian K.N."/>
            <person name="Zain B.S."/>
            <person name="Pan J."/>
            <person name="Ghosh P.K."/>
            <person name="Celma M.L."/>
            <person name="Weissman S.M."/>
        </authorList>
    </citation>
    <scope>NUCLEOTIDE SEQUENCE [GENOMIC DNA]</scope>
</reference>
<reference key="2">
    <citation type="journal article" date="1978" name="Nature">
        <title>Complete nucleotide sequence of SV40 DNA.</title>
        <authorList>
            <person name="Fiers W."/>
            <person name="Contreras R."/>
            <person name="Haegeman G."/>
            <person name="Rogiers R."/>
            <person name="van de Voorde A."/>
            <person name="van Heuverswyn H."/>
            <person name="van Herreweghe J."/>
            <person name="Volckaert G."/>
            <person name="Ysebaert M."/>
        </authorList>
    </citation>
    <scope>NUCLEOTIDE SEQUENCE [GENOMIC DNA]</scope>
    <source>
        <strain>776</strain>
    </source>
</reference>
<reference key="3">
    <citation type="journal article" date="1977" name="Cell">
        <title>Overlapping of the VP2-VP3 gene and the VP1 gene in the SV40 genome.</title>
        <authorList>
            <person name="Contreras R."/>
            <person name="Rogiers R."/>
            <person name="Van de Voorde A."/>
            <person name="Fiers W."/>
        </authorList>
    </citation>
    <scope>ALTERNATIVE INITIATION (ISOFORM VP3)</scope>
</reference>
<reference key="4">
    <citation type="journal article" date="1978" name="Nature">
        <title>Evidence for 'splicing' of SV40 16S mRNA.</title>
        <authorList>
            <person name="Haegeman G."/>
            <person name="Fiers W."/>
        </authorList>
    </citation>
    <scope>ALTERNATIVE SPLICING</scope>
</reference>
<reference key="5">
    <citation type="journal article" date="1987" name="Nature">
        <title>Myristic acid is coupled to a structural protein of polyoma virus and SV40.</title>
        <authorList>
            <person name="Streuli C.H."/>
            <person name="Griffin B.E."/>
        </authorList>
    </citation>
    <scope>MYRISTOYLATION AT GLY-2</scope>
    <scope>FUNCTION (ISOFORM VP2)</scope>
</reference>
<reference key="6">
    <citation type="journal article" date="1991" name="Virology">
        <title>Simian virus 40 Vp2/3 small structural proteins harbor their own nuclear transport signal.</title>
        <authorList>
            <person name="Clever J."/>
            <person name="Kasamatsu H."/>
        </authorList>
    </citation>
    <scope>NUCLEAR LOCALIZATION SIGNAL</scope>
    <scope>SUBCELLULAR LOCATION (ISOFORM VP2)</scope>
    <scope>SUBCELLULAR LOCATION (ISOFORM VP3)</scope>
</reference>
<reference key="7">
    <citation type="journal article" date="1993" name="J. Biol. Chem.">
        <title>Identification of a DNA binding domain in simian virus 40 capsid proteins Vp2 and Vp3.</title>
        <authorList>
            <person name="Clever J."/>
            <person name="Dean D.A."/>
            <person name="Kasamatsu H."/>
        </authorList>
    </citation>
    <scope>DNA-BINDING</scope>
    <scope>DOMAIN</scope>
</reference>
<reference key="8">
    <citation type="journal article" date="1995" name="J. Virol.">
        <title>Essential role of the Vp2 and Vp3 DNA-binding domain in simian virus 40 morphogenesis.</title>
        <authorList>
            <person name="Dean D.A."/>
            <person name="Li P.P."/>
            <person name="Lee L.M."/>
            <person name="Kasamatsu H."/>
        </authorList>
    </citation>
    <scope>MUTAGENESIS OF LYS-344 AND ARG-348</scope>
    <scope>FUNCTION (ISOFORM VP2)</scope>
    <scope>FUNCTION (ISOFORM VP3)</scope>
</reference>
<reference key="9">
    <citation type="journal article" date="1998" name="J. Mol. Biol.">
        <title>The SV40 capsid protein VP3 cooperates with the cellular transcription factor Sp1 in DNA-binding and in regulating viral promoter activity.</title>
        <authorList>
            <person name="Gordon-Shaag A."/>
            <person name="Ben-Nun-Shaul O."/>
            <person name="Kasamatsu H."/>
            <person name="Oppenheim A.B."/>
            <person name="Oppenheim A."/>
        </authorList>
    </citation>
    <scope>INTERACTION WITH HOST SP1 (ISOFORM VP3)</scope>
    <scope>FUNCTION (ISOFORM VP3)</scope>
</reference>
<reference key="10">
    <citation type="journal article" date="2002" name="J. Virol.">
        <title>Interaction of the Vp3 nuclear localization signal with the importin alpha 2/beta heterodimer directs nuclear entry of infecting simian virus 40.</title>
        <authorList>
            <person name="Nakanishi A."/>
            <person name="Shum D."/>
            <person name="Morioka H."/>
            <person name="Otsuka E."/>
            <person name="Kasamatsu H."/>
        </authorList>
    </citation>
    <scope>FUNCTION (ISOFORM VP3)</scope>
    <scope>INTERACTION WITH IMPORTIN ALPHA2-BETA HETERODIMER</scope>
</reference>
<reference key="11">
    <citation type="journal article" date="2006" name="J. Virol.">
        <title>Identification of amino acid residues within simian virus 40 capsid proteins Vp1, Vp2, and Vp3 that are required for their interaction and for viral infection.</title>
        <authorList>
            <person name="Nakanishi A."/>
            <person name="Nakamura A."/>
            <person name="Liddington R."/>
            <person name="Kasamatsu H."/>
        </authorList>
    </citation>
    <scope>INTERACTION WITH VP1 (ISOFORM VP2)</scope>
    <scope>INTERACTION WITH VP1 (ISOFORM VP3)</scope>
    <scope>MUTAGENESIS OF 276-PHE-ILE-277; 283-PRO--GLY-285; LEU-296 AND LEU-300</scope>
    <scope>DOMAIN</scope>
</reference>
<reference key="12">
    <citation type="journal article" date="2006" name="Mol. Cell">
        <title>SV40 VP2 and VP3 insertion into ER membranes is controlled by the capsid protein VP1: implications for DNA translocation out of the ER.</title>
        <authorList>
            <person name="Daniels R."/>
            <person name="Rusan N.M."/>
            <person name="Wadsworth P."/>
            <person name="Hebert D.N."/>
        </authorList>
    </citation>
    <scope>FUNCTION (ISOFORM VP2)</scope>
    <scope>FUNCTION (ISOFORM VP3)</scope>
    <scope>SUBUNIT</scope>
    <scope>SUBCELLULAR LOCATION (ISOFORM VP2)</scope>
    <scope>SUBCELLULAR LOCATION (ISOFORM VP3)</scope>
</reference>
<reference key="13">
    <citation type="journal article" date="2007" name="PLoS Pathog.">
        <title>A very late viral protein triggers the lytic release of SV40.</title>
        <authorList>
            <person name="Daniels R."/>
            <person name="Sadowicz D."/>
            <person name="Hebert D.N."/>
        </authorList>
    </citation>
    <scope>ALTERNATIVE INITIATION (ISOFORM VP4)</scope>
    <scope>SUBCELLULAR LOCATION (ISOFORM VP4)</scope>
</reference>
<reference key="14">
    <citation type="journal article" date="2011" name="PLoS Pathog.">
        <title>The SV40 late protein VP4 is a viroporin that forms pores to disrupt membranes for viral release.</title>
        <authorList>
            <person name="Raghava S."/>
            <person name="Giorda K.M."/>
            <person name="Romano F.B."/>
            <person name="Heuck A.P."/>
            <person name="Hebert D.N."/>
        </authorList>
    </citation>
    <scope>FUNCTION (ISOFORM VP4)</scope>
</reference>
<reference key="15">
    <citation type="journal article" date="2015" name="J. Virol.">
        <title>The endoplasmic reticulum membrane J protein C18 executes a distinct role in promoting simian virus 40 membrane penetration.</title>
        <authorList>
            <person name="Bagchi P."/>
            <person name="Walczak C.P."/>
            <person name="Tsai B."/>
        </authorList>
    </citation>
    <scope>FUNCTION (ISOFORM VP3)</scope>
    <scope>SUBCELLULAR LOCATION (ISOFORM VP3)</scope>
</reference>
<organismHost>
    <name type="scientific">Macaca</name>
    <name type="common">macaques</name>
    <dbReference type="NCBI Taxonomy" id="9539"/>
</organismHost>